<protein>
    <recommendedName>
        <fullName evidence="1">tRNA N6-adenosine threonylcarbamoyltransferase</fullName>
        <ecNumber evidence="1">2.3.1.234</ecNumber>
    </recommendedName>
    <alternativeName>
        <fullName evidence="1">N6-L-threonylcarbamoyladenine synthase</fullName>
        <shortName evidence="1">t(6)A synthase</shortName>
    </alternativeName>
    <alternativeName>
        <fullName evidence="1">t(6)A37 threonylcarbamoyladenosine biosynthesis protein TsaD</fullName>
    </alternativeName>
    <alternativeName>
        <fullName evidence="1">tRNA threonylcarbamoyladenosine biosynthesis protein TsaD</fullName>
    </alternativeName>
</protein>
<keyword id="KW-0012">Acyltransferase</keyword>
<keyword id="KW-0963">Cytoplasm</keyword>
<keyword id="KW-0903">Direct protein sequencing</keyword>
<keyword id="KW-0408">Iron</keyword>
<keyword id="KW-0479">Metal-binding</keyword>
<keyword id="KW-0964">Secreted</keyword>
<keyword id="KW-0808">Transferase</keyword>
<keyword id="KW-0819">tRNA processing</keyword>
<sequence length="325" mass="35190">MRILGIETSCDETGVAIYDEDKGLVANQLYSQIDMHADYGGVVPELASRDHIRKTLPLIQEALKEANLQPSDIDGIAYTAGPGLVGALLVGSTIARSLAYAWNVPALGVHHMEGHLLAPMLEENAPEFPFVALLISGGHTQLVKVDGVGQYELLGESIDDAAGEAFDKTGKLLGLDYPAGVAMSKLAESGTPNRFKFPRPMTDRPGLDFSFSGLKTFAANTIKANLNENGELDEQTKCDIAHAFQQAVVDTILIKCKRALEQTGYKRLVMAGGVSANKQLRADLAEMMKKLKGEVFYPRPQFCTDNGAMIAYTGFLRLKTMNKPT</sequence>
<comment type="function">
    <text evidence="1">Required for the formation of a threonylcarbamoyl group on adenosine at position 37 (t(6)A37) in tRNAs that read codons beginning with adenine. Is involved in the transfer of the threonylcarbamoyl moiety of threonylcarbamoyl-AMP (TC-AMP) to the N6 group of A37, together with TsaE and TsaB. TsaD likely plays a direct catalytic role in this reaction.</text>
</comment>
<comment type="catalytic activity">
    <reaction evidence="1">
        <text>L-threonylcarbamoyladenylate + adenosine(37) in tRNA = N(6)-L-threonylcarbamoyladenosine(37) in tRNA + AMP + H(+)</text>
        <dbReference type="Rhea" id="RHEA:37059"/>
        <dbReference type="Rhea" id="RHEA-COMP:10162"/>
        <dbReference type="Rhea" id="RHEA-COMP:10163"/>
        <dbReference type="ChEBI" id="CHEBI:15378"/>
        <dbReference type="ChEBI" id="CHEBI:73682"/>
        <dbReference type="ChEBI" id="CHEBI:74411"/>
        <dbReference type="ChEBI" id="CHEBI:74418"/>
        <dbReference type="ChEBI" id="CHEBI:456215"/>
        <dbReference type="EC" id="2.3.1.234"/>
    </reaction>
</comment>
<comment type="cofactor">
    <cofactor evidence="1">
        <name>Fe(2+)</name>
        <dbReference type="ChEBI" id="CHEBI:29033"/>
    </cofactor>
    <text evidence="1">Binds 1 Fe(2+) ion per subunit.</text>
</comment>
<comment type="subcellular location">
    <subcellularLocation>
        <location evidence="1">Cytoplasm</location>
    </subcellularLocation>
    <subcellularLocation>
        <location>Secreted</location>
    </subcellularLocation>
    <text>Not secreted through the conventional secretory pathway since it lacks a signal sequence.</text>
</comment>
<comment type="similarity">
    <text evidence="1">Belongs to the KAE1 / TsaD family.</text>
</comment>
<comment type="caution">
    <text evidence="2">Was originally thought to have endopeptidase activity (PubMed:1885539). But it could not be confirmed with orthologs purified from P.abyssi (PubMed:17766251, PubMed:21183954).</text>
</comment>
<gene>
    <name evidence="1" type="primary">tsaD</name>
    <name type="synonym">gcp</name>
</gene>
<accession>P36175</accession>
<proteinExistence type="evidence at protein level"/>
<reference key="1">
    <citation type="journal article" date="1991" name="J. Bacteriol.">
        <title>Cloning, nucleotide sequence, and expression of the Pasteurella haemolytica A1 glycoprotease gene.</title>
        <authorList>
            <person name="Abdullah K.M."/>
            <person name="Lo R.Y.C."/>
            <person name="Mellors A."/>
        </authorList>
    </citation>
    <scope>NUCLEOTIDE SEQUENCE [GENOMIC DNA]</scope>
    <scope>PARTIAL PROTEIN SEQUENCE</scope>
    <source>
        <strain>Serotype A1</strain>
    </source>
</reference>
<feature type="chain" id="PRO_0000096976" description="tRNA N6-adenosine threonylcarbamoyltransferase">
    <location>
        <begin position="1"/>
        <end position="325"/>
    </location>
</feature>
<feature type="binding site" evidence="1">
    <location>
        <position position="111"/>
    </location>
    <ligand>
        <name>Fe cation</name>
        <dbReference type="ChEBI" id="CHEBI:24875"/>
    </ligand>
</feature>
<feature type="binding site" evidence="1">
    <location>
        <position position="115"/>
    </location>
    <ligand>
        <name>Fe cation</name>
        <dbReference type="ChEBI" id="CHEBI:24875"/>
    </ligand>
</feature>
<feature type="binding site" evidence="1">
    <location>
        <begin position="134"/>
        <end position="138"/>
    </location>
    <ligand>
        <name>substrate</name>
    </ligand>
</feature>
<feature type="binding site" evidence="1">
    <location>
        <position position="167"/>
    </location>
    <ligand>
        <name>substrate</name>
    </ligand>
</feature>
<feature type="binding site" evidence="1">
    <location>
        <position position="180"/>
    </location>
    <ligand>
        <name>substrate</name>
    </ligand>
</feature>
<feature type="binding site" evidence="1">
    <location>
        <position position="277"/>
    </location>
    <ligand>
        <name>substrate</name>
    </ligand>
</feature>
<feature type="binding site" evidence="1">
    <location>
        <position position="305"/>
    </location>
    <ligand>
        <name>Fe cation</name>
        <dbReference type="ChEBI" id="CHEBI:24875"/>
    </ligand>
</feature>
<organism>
    <name type="scientific">Mannheimia haemolytica</name>
    <name type="common">Pasteurella haemolytica</name>
    <dbReference type="NCBI Taxonomy" id="75985"/>
    <lineage>
        <taxon>Bacteria</taxon>
        <taxon>Pseudomonadati</taxon>
        <taxon>Pseudomonadota</taxon>
        <taxon>Gammaproteobacteria</taxon>
        <taxon>Pasteurellales</taxon>
        <taxon>Pasteurellaceae</taxon>
        <taxon>Mannheimia</taxon>
    </lineage>
</organism>
<name>TSAD_MANHA</name>
<evidence type="ECO:0000255" key="1">
    <source>
        <dbReference type="HAMAP-Rule" id="MF_01445"/>
    </source>
</evidence>
<evidence type="ECO:0000305" key="2">
    <source>
    </source>
</evidence>
<dbReference type="EC" id="2.3.1.234" evidence="1"/>
<dbReference type="EMBL" id="U15958">
    <property type="protein sequence ID" value="AAA80282.1"/>
    <property type="molecule type" value="Genomic_DNA"/>
</dbReference>
<dbReference type="PIR" id="A38108">
    <property type="entry name" value="A38108"/>
</dbReference>
<dbReference type="SMR" id="P36175"/>
<dbReference type="STRING" id="75985.WC39_09835"/>
<dbReference type="GO" id="GO:0005737">
    <property type="term" value="C:cytoplasm"/>
    <property type="evidence" value="ECO:0007669"/>
    <property type="project" value="UniProtKB-SubCell"/>
</dbReference>
<dbReference type="GO" id="GO:0005576">
    <property type="term" value="C:extracellular region"/>
    <property type="evidence" value="ECO:0007669"/>
    <property type="project" value="UniProtKB-SubCell"/>
</dbReference>
<dbReference type="GO" id="GO:0005506">
    <property type="term" value="F:iron ion binding"/>
    <property type="evidence" value="ECO:0007669"/>
    <property type="project" value="UniProtKB-UniRule"/>
</dbReference>
<dbReference type="GO" id="GO:0061711">
    <property type="term" value="F:N(6)-L-threonylcarbamoyladenine synthase activity"/>
    <property type="evidence" value="ECO:0007669"/>
    <property type="project" value="UniProtKB-EC"/>
</dbReference>
<dbReference type="GO" id="GO:0002949">
    <property type="term" value="P:tRNA threonylcarbamoyladenosine modification"/>
    <property type="evidence" value="ECO:0007669"/>
    <property type="project" value="UniProtKB-UniRule"/>
</dbReference>
<dbReference type="CDD" id="cd24133">
    <property type="entry name" value="ASKHA_NBD_TsaD_bac"/>
    <property type="match status" value="1"/>
</dbReference>
<dbReference type="FunFam" id="3.30.420.40:FF:000012">
    <property type="entry name" value="tRNA N6-adenosine threonylcarbamoyltransferase"/>
    <property type="match status" value="1"/>
</dbReference>
<dbReference type="FunFam" id="3.30.420.40:FF:000031">
    <property type="entry name" value="tRNA N6-adenosine threonylcarbamoyltransferase"/>
    <property type="match status" value="1"/>
</dbReference>
<dbReference type="Gene3D" id="3.30.420.40">
    <property type="match status" value="2"/>
</dbReference>
<dbReference type="HAMAP" id="MF_01445">
    <property type="entry name" value="TsaD"/>
    <property type="match status" value="1"/>
</dbReference>
<dbReference type="InterPro" id="IPR043129">
    <property type="entry name" value="ATPase_NBD"/>
</dbReference>
<dbReference type="InterPro" id="IPR000905">
    <property type="entry name" value="Gcp-like_dom"/>
</dbReference>
<dbReference type="InterPro" id="IPR017861">
    <property type="entry name" value="KAE1/TsaD"/>
</dbReference>
<dbReference type="InterPro" id="IPR017860">
    <property type="entry name" value="Peptidase_M22_CS"/>
</dbReference>
<dbReference type="InterPro" id="IPR022450">
    <property type="entry name" value="TsaD"/>
</dbReference>
<dbReference type="NCBIfam" id="TIGR00329">
    <property type="entry name" value="gcp_kae1"/>
    <property type="match status" value="1"/>
</dbReference>
<dbReference type="NCBIfam" id="TIGR03723">
    <property type="entry name" value="T6A_TsaD_YgjD"/>
    <property type="match status" value="1"/>
</dbReference>
<dbReference type="PANTHER" id="PTHR11735">
    <property type="entry name" value="TRNA N6-ADENOSINE THREONYLCARBAMOYLTRANSFERASE"/>
    <property type="match status" value="1"/>
</dbReference>
<dbReference type="PANTHER" id="PTHR11735:SF6">
    <property type="entry name" value="TRNA N6-ADENOSINE THREONYLCARBAMOYLTRANSFERASE, MITOCHONDRIAL"/>
    <property type="match status" value="1"/>
</dbReference>
<dbReference type="Pfam" id="PF00814">
    <property type="entry name" value="TsaD"/>
    <property type="match status" value="1"/>
</dbReference>
<dbReference type="PRINTS" id="PR00789">
    <property type="entry name" value="OSIALOPTASE"/>
</dbReference>
<dbReference type="SUPFAM" id="SSF53067">
    <property type="entry name" value="Actin-like ATPase domain"/>
    <property type="match status" value="2"/>
</dbReference>
<dbReference type="PROSITE" id="PS01016">
    <property type="entry name" value="GLYCOPROTEASE"/>
    <property type="match status" value="1"/>
</dbReference>